<accession>Q5LG62</accession>
<evidence type="ECO:0000255" key="1">
    <source>
        <dbReference type="HAMAP-Rule" id="MF_00454"/>
    </source>
</evidence>
<reference key="1">
    <citation type="journal article" date="2005" name="Science">
        <title>Extensive DNA inversions in the B. fragilis genome control variable gene expression.</title>
        <authorList>
            <person name="Cerdeno-Tarraga A.-M."/>
            <person name="Patrick S."/>
            <person name="Crossman L.C."/>
            <person name="Blakely G."/>
            <person name="Abratt V."/>
            <person name="Lennard N."/>
            <person name="Poxton I."/>
            <person name="Duerden B."/>
            <person name="Harris B."/>
            <person name="Quail M.A."/>
            <person name="Barron A."/>
            <person name="Clark L."/>
            <person name="Corton C."/>
            <person name="Doggett J."/>
            <person name="Holden M.T.G."/>
            <person name="Larke N."/>
            <person name="Line A."/>
            <person name="Lord A."/>
            <person name="Norbertczak H."/>
            <person name="Ormond D."/>
            <person name="Price C."/>
            <person name="Rabbinowitsch E."/>
            <person name="Woodward J."/>
            <person name="Barrell B.G."/>
            <person name="Parkhill J."/>
        </authorList>
    </citation>
    <scope>NUCLEOTIDE SEQUENCE [LARGE SCALE GENOMIC DNA]</scope>
    <source>
        <strain>ATCC 25285 / DSM 2151 / CCUG 4856 / JCM 11019 / LMG 10263 / NCTC 9343 / Onslow / VPI 2553 / EN-2</strain>
    </source>
</reference>
<protein>
    <recommendedName>
        <fullName evidence="1">Fluoride-specific ion channel FluC</fullName>
    </recommendedName>
</protein>
<comment type="function">
    <text evidence="1">Fluoride-specific ion channel. Important for reducing fluoride concentration in the cell, thus reducing its toxicity.</text>
</comment>
<comment type="catalytic activity">
    <reaction evidence="1">
        <text>fluoride(in) = fluoride(out)</text>
        <dbReference type="Rhea" id="RHEA:76159"/>
        <dbReference type="ChEBI" id="CHEBI:17051"/>
    </reaction>
    <physiologicalReaction direction="left-to-right" evidence="1">
        <dbReference type="Rhea" id="RHEA:76160"/>
    </physiologicalReaction>
</comment>
<comment type="activity regulation">
    <text evidence="1">Na(+) is not transported, but it plays an essential structural role and its presence is essential for fluoride channel function.</text>
</comment>
<comment type="subcellular location">
    <subcellularLocation>
        <location evidence="1">Cell inner membrane</location>
        <topology evidence="1">Multi-pass membrane protein</topology>
    </subcellularLocation>
</comment>
<comment type="similarity">
    <text evidence="1">Belongs to the fluoride channel Fluc/FEX (TC 1.A.43) family.</text>
</comment>
<sequence length="127" mass="14038">MKEIIYIFIGGGMGSVTRYLTQIAVNERLSPALFPFPWGTFAVNIIGSLLIGFFYSFSERFNLSFELRLFLTVGFCGGFTTFSTLANDSLSLLKGGFYGIFTFYVFISILLGLLAVLAGGYLGEQFK</sequence>
<name>FLUC_BACFN</name>
<keyword id="KW-0997">Cell inner membrane</keyword>
<keyword id="KW-1003">Cell membrane</keyword>
<keyword id="KW-0407">Ion channel</keyword>
<keyword id="KW-0406">Ion transport</keyword>
<keyword id="KW-0472">Membrane</keyword>
<keyword id="KW-0479">Metal-binding</keyword>
<keyword id="KW-0915">Sodium</keyword>
<keyword id="KW-0812">Transmembrane</keyword>
<keyword id="KW-1133">Transmembrane helix</keyword>
<keyword id="KW-0813">Transport</keyword>
<gene>
    <name evidence="1" type="primary">fluC</name>
    <name evidence="1" type="synonym">crcB</name>
    <name type="ordered locus">BF1157</name>
</gene>
<feature type="chain" id="PRO_0000252859" description="Fluoride-specific ion channel FluC">
    <location>
        <begin position="1"/>
        <end position="127"/>
    </location>
</feature>
<feature type="transmembrane region" description="Helical" evidence="1">
    <location>
        <begin position="4"/>
        <end position="24"/>
    </location>
</feature>
<feature type="transmembrane region" description="Helical" evidence="1">
    <location>
        <begin position="34"/>
        <end position="54"/>
    </location>
</feature>
<feature type="transmembrane region" description="Helical" evidence="1">
    <location>
        <begin position="65"/>
        <end position="85"/>
    </location>
</feature>
<feature type="transmembrane region" description="Helical" evidence="1">
    <location>
        <begin position="97"/>
        <end position="117"/>
    </location>
</feature>
<feature type="binding site" evidence="1">
    <location>
        <position position="77"/>
    </location>
    <ligand>
        <name>Na(+)</name>
        <dbReference type="ChEBI" id="CHEBI:29101"/>
        <note>structural</note>
    </ligand>
</feature>
<feature type="binding site" evidence="1">
    <location>
        <position position="80"/>
    </location>
    <ligand>
        <name>Na(+)</name>
        <dbReference type="ChEBI" id="CHEBI:29101"/>
        <note>structural</note>
    </ligand>
</feature>
<organism>
    <name type="scientific">Bacteroides fragilis (strain ATCC 25285 / DSM 2151 / CCUG 4856 / JCM 11019 / LMG 10263 / NCTC 9343 / Onslow / VPI 2553 / EN-2)</name>
    <dbReference type="NCBI Taxonomy" id="272559"/>
    <lineage>
        <taxon>Bacteria</taxon>
        <taxon>Pseudomonadati</taxon>
        <taxon>Bacteroidota</taxon>
        <taxon>Bacteroidia</taxon>
        <taxon>Bacteroidales</taxon>
        <taxon>Bacteroidaceae</taxon>
        <taxon>Bacteroides</taxon>
    </lineage>
</organism>
<dbReference type="EMBL" id="CR626927">
    <property type="protein sequence ID" value="CAH06879.1"/>
    <property type="molecule type" value="Genomic_DNA"/>
</dbReference>
<dbReference type="RefSeq" id="WP_005785744.1">
    <property type="nucleotide sequence ID" value="NZ_UFTH01000001.1"/>
</dbReference>
<dbReference type="SMR" id="Q5LG62"/>
<dbReference type="PaxDb" id="272559-BF9343_1098"/>
<dbReference type="GeneID" id="60369816"/>
<dbReference type="KEGG" id="bfs:BF9343_1098"/>
<dbReference type="eggNOG" id="COG0239">
    <property type="taxonomic scope" value="Bacteria"/>
</dbReference>
<dbReference type="HOGENOM" id="CLU_114342_2_3_10"/>
<dbReference type="Proteomes" id="UP000006731">
    <property type="component" value="Chromosome"/>
</dbReference>
<dbReference type="GO" id="GO:0005886">
    <property type="term" value="C:plasma membrane"/>
    <property type="evidence" value="ECO:0007669"/>
    <property type="project" value="UniProtKB-SubCell"/>
</dbReference>
<dbReference type="GO" id="GO:0062054">
    <property type="term" value="F:fluoride channel activity"/>
    <property type="evidence" value="ECO:0007669"/>
    <property type="project" value="UniProtKB-UniRule"/>
</dbReference>
<dbReference type="GO" id="GO:0046872">
    <property type="term" value="F:metal ion binding"/>
    <property type="evidence" value="ECO:0007669"/>
    <property type="project" value="UniProtKB-KW"/>
</dbReference>
<dbReference type="GO" id="GO:0140114">
    <property type="term" value="P:cellular detoxification of fluoride"/>
    <property type="evidence" value="ECO:0007669"/>
    <property type="project" value="UniProtKB-UniRule"/>
</dbReference>
<dbReference type="HAMAP" id="MF_00454">
    <property type="entry name" value="FluC"/>
    <property type="match status" value="1"/>
</dbReference>
<dbReference type="InterPro" id="IPR003691">
    <property type="entry name" value="FluC"/>
</dbReference>
<dbReference type="NCBIfam" id="TIGR00494">
    <property type="entry name" value="crcB"/>
    <property type="match status" value="1"/>
</dbReference>
<dbReference type="PANTHER" id="PTHR28259">
    <property type="entry name" value="FLUORIDE EXPORT PROTEIN 1-RELATED"/>
    <property type="match status" value="1"/>
</dbReference>
<dbReference type="PANTHER" id="PTHR28259:SF1">
    <property type="entry name" value="FLUORIDE EXPORT PROTEIN 1-RELATED"/>
    <property type="match status" value="1"/>
</dbReference>
<dbReference type="Pfam" id="PF02537">
    <property type="entry name" value="CRCB"/>
    <property type="match status" value="1"/>
</dbReference>
<proteinExistence type="inferred from homology"/>